<comment type="catalytic activity">
    <reaction evidence="1">
        <text>L-citrulline + L-aspartate + ATP = 2-(N(omega)-L-arginino)succinate + AMP + diphosphate + H(+)</text>
        <dbReference type="Rhea" id="RHEA:10932"/>
        <dbReference type="ChEBI" id="CHEBI:15378"/>
        <dbReference type="ChEBI" id="CHEBI:29991"/>
        <dbReference type="ChEBI" id="CHEBI:30616"/>
        <dbReference type="ChEBI" id="CHEBI:33019"/>
        <dbReference type="ChEBI" id="CHEBI:57472"/>
        <dbReference type="ChEBI" id="CHEBI:57743"/>
        <dbReference type="ChEBI" id="CHEBI:456215"/>
        <dbReference type="EC" id="6.3.4.5"/>
    </reaction>
</comment>
<comment type="pathway">
    <text evidence="1">Amino-acid biosynthesis; L-arginine biosynthesis; L-arginine from L-ornithine and carbamoyl phosphate: step 2/3.</text>
</comment>
<comment type="subunit">
    <text evidence="1">Homotetramer.</text>
</comment>
<comment type="subcellular location">
    <subcellularLocation>
        <location evidence="1">Cytoplasm</location>
    </subcellularLocation>
</comment>
<comment type="similarity">
    <text evidence="1">Belongs to the argininosuccinate synthase family. Type 2 subfamily.</text>
</comment>
<gene>
    <name evidence="1" type="primary">argG</name>
    <name type="ordered locus">Vapar_3766</name>
</gene>
<keyword id="KW-0028">Amino-acid biosynthesis</keyword>
<keyword id="KW-0055">Arginine biosynthesis</keyword>
<keyword id="KW-0067">ATP-binding</keyword>
<keyword id="KW-0963">Cytoplasm</keyword>
<keyword id="KW-0436">Ligase</keyword>
<keyword id="KW-0547">Nucleotide-binding</keyword>
<evidence type="ECO:0000255" key="1">
    <source>
        <dbReference type="HAMAP-Rule" id="MF_00581"/>
    </source>
</evidence>
<sequence>MSTILQNVPAGQKVGIAFSGGLDTSAALHWMKLKGAIPYAYTANLGQPDEPDYDEIPRKAMLYGAENARLIDCRAQLANEGIAALQAGAFHVTTAGVTYFNTTPLGRAVTGTMLVSAMKEDDVHIWGDGSTYKGNDIERFYRYGLLTNPNLKIYKPWLDQLFIDELGGRAEMSAFMTKAGFGYKMSAEKAYSTDSNMLGATHEAKDLENLDSGMQIVQPIMGVAFWKDEVEVKRETVSVRFEEGRPVALNGVEHANLVELILEANRIGGRHGLGMSDQIENRIIEAKSRGIYEAPGLALLFIAYERLVTGIHNEDTIEQYRDHGRKLGRLLYQGRWFDPQAIMLRETAQRWVARAVTGEVTIELRRGNDYSILNTVSPNLTYKPERLSMEKVAGAFTPLDRIGQLTMRNLDIVDTREKLAIYTRTGLLSPGQGTAVPRLSNDDETK</sequence>
<organism>
    <name type="scientific">Variovorax paradoxus (strain S110)</name>
    <dbReference type="NCBI Taxonomy" id="543728"/>
    <lineage>
        <taxon>Bacteria</taxon>
        <taxon>Pseudomonadati</taxon>
        <taxon>Pseudomonadota</taxon>
        <taxon>Betaproteobacteria</taxon>
        <taxon>Burkholderiales</taxon>
        <taxon>Comamonadaceae</taxon>
        <taxon>Variovorax</taxon>
    </lineage>
</organism>
<accession>C5CUG9</accession>
<dbReference type="EC" id="6.3.4.5" evidence="1"/>
<dbReference type="EMBL" id="CP001635">
    <property type="protein sequence ID" value="ACS20382.1"/>
    <property type="molecule type" value="Genomic_DNA"/>
</dbReference>
<dbReference type="SMR" id="C5CUG9"/>
<dbReference type="STRING" id="543728.Vapar_3766"/>
<dbReference type="KEGG" id="vap:Vapar_3766"/>
<dbReference type="eggNOG" id="COG0137">
    <property type="taxonomic scope" value="Bacteria"/>
</dbReference>
<dbReference type="HOGENOM" id="CLU_032784_4_1_4"/>
<dbReference type="OrthoDB" id="9801641at2"/>
<dbReference type="UniPathway" id="UPA00068">
    <property type="reaction ID" value="UER00113"/>
</dbReference>
<dbReference type="GO" id="GO:0005737">
    <property type="term" value="C:cytoplasm"/>
    <property type="evidence" value="ECO:0007669"/>
    <property type="project" value="UniProtKB-SubCell"/>
</dbReference>
<dbReference type="GO" id="GO:0004055">
    <property type="term" value="F:argininosuccinate synthase activity"/>
    <property type="evidence" value="ECO:0007669"/>
    <property type="project" value="UniProtKB-UniRule"/>
</dbReference>
<dbReference type="GO" id="GO:0005524">
    <property type="term" value="F:ATP binding"/>
    <property type="evidence" value="ECO:0007669"/>
    <property type="project" value="UniProtKB-UniRule"/>
</dbReference>
<dbReference type="GO" id="GO:0042803">
    <property type="term" value="F:protein homodimerization activity"/>
    <property type="evidence" value="ECO:0007669"/>
    <property type="project" value="InterPro"/>
</dbReference>
<dbReference type="GO" id="GO:0000053">
    <property type="term" value="P:argininosuccinate metabolic process"/>
    <property type="evidence" value="ECO:0007669"/>
    <property type="project" value="TreeGrafter"/>
</dbReference>
<dbReference type="GO" id="GO:0006526">
    <property type="term" value="P:L-arginine biosynthetic process"/>
    <property type="evidence" value="ECO:0007669"/>
    <property type="project" value="UniProtKB-UniRule"/>
</dbReference>
<dbReference type="GO" id="GO:0000050">
    <property type="term" value="P:urea cycle"/>
    <property type="evidence" value="ECO:0007669"/>
    <property type="project" value="TreeGrafter"/>
</dbReference>
<dbReference type="CDD" id="cd01999">
    <property type="entry name" value="ASS"/>
    <property type="match status" value="1"/>
</dbReference>
<dbReference type="FunFam" id="1.10.287.400:FF:000001">
    <property type="entry name" value="Argininosuccinate synthase"/>
    <property type="match status" value="1"/>
</dbReference>
<dbReference type="Gene3D" id="1.10.287.400">
    <property type="match status" value="1"/>
</dbReference>
<dbReference type="Gene3D" id="3.90.1260.10">
    <property type="entry name" value="Argininosuccinate synthetase, chain A, domain 2"/>
    <property type="match status" value="1"/>
</dbReference>
<dbReference type="Gene3D" id="3.40.50.620">
    <property type="entry name" value="HUPs"/>
    <property type="match status" value="1"/>
</dbReference>
<dbReference type="HAMAP" id="MF_00581">
    <property type="entry name" value="Arg_succ_synth_type2"/>
    <property type="match status" value="1"/>
</dbReference>
<dbReference type="InterPro" id="IPR023437">
    <property type="entry name" value="Arg_succ_synth_type2_subfam"/>
</dbReference>
<dbReference type="InterPro" id="IPR048268">
    <property type="entry name" value="Arginosuc_syn_C"/>
</dbReference>
<dbReference type="InterPro" id="IPR048267">
    <property type="entry name" value="Arginosuc_syn_N"/>
</dbReference>
<dbReference type="InterPro" id="IPR001518">
    <property type="entry name" value="Arginosuc_synth"/>
</dbReference>
<dbReference type="InterPro" id="IPR018223">
    <property type="entry name" value="Arginosuc_synth_CS"/>
</dbReference>
<dbReference type="InterPro" id="IPR023434">
    <property type="entry name" value="Arginosuc_synth_type_1_subfam"/>
</dbReference>
<dbReference type="InterPro" id="IPR024074">
    <property type="entry name" value="AS_cat/multimer_dom_body"/>
</dbReference>
<dbReference type="InterPro" id="IPR024073">
    <property type="entry name" value="AS_multimer_C_tail"/>
</dbReference>
<dbReference type="InterPro" id="IPR014729">
    <property type="entry name" value="Rossmann-like_a/b/a_fold"/>
</dbReference>
<dbReference type="NCBIfam" id="TIGR00032">
    <property type="entry name" value="argG"/>
    <property type="match status" value="1"/>
</dbReference>
<dbReference type="NCBIfam" id="NF003779">
    <property type="entry name" value="PRK05370.1"/>
    <property type="match status" value="1"/>
</dbReference>
<dbReference type="PANTHER" id="PTHR11587">
    <property type="entry name" value="ARGININOSUCCINATE SYNTHASE"/>
    <property type="match status" value="1"/>
</dbReference>
<dbReference type="PANTHER" id="PTHR11587:SF2">
    <property type="entry name" value="ARGININOSUCCINATE SYNTHASE"/>
    <property type="match status" value="1"/>
</dbReference>
<dbReference type="Pfam" id="PF20979">
    <property type="entry name" value="Arginosuc_syn_C"/>
    <property type="match status" value="1"/>
</dbReference>
<dbReference type="Pfam" id="PF00764">
    <property type="entry name" value="Arginosuc_synth"/>
    <property type="match status" value="1"/>
</dbReference>
<dbReference type="SUPFAM" id="SSF52402">
    <property type="entry name" value="Adenine nucleotide alpha hydrolases-like"/>
    <property type="match status" value="1"/>
</dbReference>
<dbReference type="SUPFAM" id="SSF69864">
    <property type="entry name" value="Argininosuccinate synthetase, C-terminal domain"/>
    <property type="match status" value="1"/>
</dbReference>
<dbReference type="PROSITE" id="PS00564">
    <property type="entry name" value="ARGININOSUCCIN_SYN_1"/>
    <property type="match status" value="1"/>
</dbReference>
<dbReference type="PROSITE" id="PS00565">
    <property type="entry name" value="ARGININOSUCCIN_SYN_2"/>
    <property type="match status" value="1"/>
</dbReference>
<reference key="1">
    <citation type="journal article" date="2011" name="J. Bacteriol.">
        <title>Complete genome sequence of the metabolically versatile plant growth-promoting endophyte, Variovorax paradoxus S110.</title>
        <authorList>
            <person name="Han J.I."/>
            <person name="Choi H.K."/>
            <person name="Lee S.W."/>
            <person name="Orwin P.M."/>
            <person name="Kim J."/>
            <person name="Laroe S.L."/>
            <person name="Kim T.G."/>
            <person name="O'Neil J."/>
            <person name="Leadbetter J.R."/>
            <person name="Lee S.Y."/>
            <person name="Hur C.G."/>
            <person name="Spain J.C."/>
            <person name="Ovchinnikova G."/>
            <person name="Goodwin L."/>
            <person name="Han C."/>
        </authorList>
    </citation>
    <scope>NUCLEOTIDE SEQUENCE [LARGE SCALE GENOMIC DNA]</scope>
    <source>
        <strain>S110</strain>
    </source>
</reference>
<name>ASSY_VARPS</name>
<proteinExistence type="inferred from homology"/>
<feature type="chain" id="PRO_1000212132" description="Argininosuccinate synthase">
    <location>
        <begin position="1"/>
        <end position="446"/>
    </location>
</feature>
<feature type="binding site" evidence="1">
    <location>
        <begin position="17"/>
        <end position="25"/>
    </location>
    <ligand>
        <name>ATP</name>
        <dbReference type="ChEBI" id="CHEBI:30616"/>
    </ligand>
</feature>
<feature type="binding site" evidence="1">
    <location>
        <position position="43"/>
    </location>
    <ligand>
        <name>ATP</name>
        <dbReference type="ChEBI" id="CHEBI:30616"/>
    </ligand>
</feature>
<feature type="binding site" evidence="1">
    <location>
        <position position="99"/>
    </location>
    <ligand>
        <name>L-citrulline</name>
        <dbReference type="ChEBI" id="CHEBI:57743"/>
    </ligand>
</feature>
<feature type="binding site" evidence="1">
    <location>
        <position position="129"/>
    </location>
    <ligand>
        <name>ATP</name>
        <dbReference type="ChEBI" id="CHEBI:30616"/>
    </ligand>
</feature>
<feature type="binding site" evidence="1">
    <location>
        <position position="131"/>
    </location>
    <ligand>
        <name>ATP</name>
        <dbReference type="ChEBI" id="CHEBI:30616"/>
    </ligand>
</feature>
<feature type="binding site" evidence="1">
    <location>
        <position position="131"/>
    </location>
    <ligand>
        <name>L-aspartate</name>
        <dbReference type="ChEBI" id="CHEBI:29991"/>
    </ligand>
</feature>
<feature type="binding site" evidence="1">
    <location>
        <position position="135"/>
    </location>
    <ligand>
        <name>L-aspartate</name>
        <dbReference type="ChEBI" id="CHEBI:29991"/>
    </ligand>
</feature>
<feature type="binding site" evidence="1">
    <location>
        <position position="135"/>
    </location>
    <ligand>
        <name>L-citrulline</name>
        <dbReference type="ChEBI" id="CHEBI:57743"/>
    </ligand>
</feature>
<feature type="binding site" evidence="1">
    <location>
        <position position="136"/>
    </location>
    <ligand>
        <name>ATP</name>
        <dbReference type="ChEBI" id="CHEBI:30616"/>
    </ligand>
</feature>
<feature type="binding site" evidence="1">
    <location>
        <position position="136"/>
    </location>
    <ligand>
        <name>L-aspartate</name>
        <dbReference type="ChEBI" id="CHEBI:29991"/>
    </ligand>
</feature>
<feature type="binding site" evidence="1">
    <location>
        <position position="139"/>
    </location>
    <ligand>
        <name>L-citrulline</name>
        <dbReference type="ChEBI" id="CHEBI:57743"/>
    </ligand>
</feature>
<feature type="binding site" evidence="1">
    <location>
        <position position="192"/>
    </location>
    <ligand>
        <name>L-citrulline</name>
        <dbReference type="ChEBI" id="CHEBI:57743"/>
    </ligand>
</feature>
<feature type="binding site" evidence="1">
    <location>
        <position position="194"/>
    </location>
    <ligand>
        <name>ATP</name>
        <dbReference type="ChEBI" id="CHEBI:30616"/>
    </ligand>
</feature>
<feature type="binding site" evidence="1">
    <location>
        <position position="201"/>
    </location>
    <ligand>
        <name>L-citrulline</name>
        <dbReference type="ChEBI" id="CHEBI:57743"/>
    </ligand>
</feature>
<feature type="binding site" evidence="1">
    <location>
        <position position="203"/>
    </location>
    <ligand>
        <name>L-citrulline</name>
        <dbReference type="ChEBI" id="CHEBI:57743"/>
    </ligand>
</feature>
<feature type="binding site" evidence="1">
    <location>
        <position position="280"/>
    </location>
    <ligand>
        <name>L-citrulline</name>
        <dbReference type="ChEBI" id="CHEBI:57743"/>
    </ligand>
</feature>
<protein>
    <recommendedName>
        <fullName evidence="1">Argininosuccinate synthase</fullName>
        <ecNumber evidence="1">6.3.4.5</ecNumber>
    </recommendedName>
    <alternativeName>
        <fullName evidence="1">Citrulline--aspartate ligase</fullName>
    </alternativeName>
</protein>